<accession>A0LII4</accession>
<comment type="function">
    <text evidence="1">DNA-dependent RNA polymerase catalyzes the transcription of DNA into RNA using the four ribonucleoside triphosphates as substrates.</text>
</comment>
<comment type="catalytic activity">
    <reaction evidence="1">
        <text>RNA(n) + a ribonucleoside 5'-triphosphate = RNA(n+1) + diphosphate</text>
        <dbReference type="Rhea" id="RHEA:21248"/>
        <dbReference type="Rhea" id="RHEA-COMP:14527"/>
        <dbReference type="Rhea" id="RHEA-COMP:17342"/>
        <dbReference type="ChEBI" id="CHEBI:33019"/>
        <dbReference type="ChEBI" id="CHEBI:61557"/>
        <dbReference type="ChEBI" id="CHEBI:140395"/>
        <dbReference type="EC" id="2.7.7.6"/>
    </reaction>
</comment>
<comment type="subunit">
    <text evidence="1">The RNAP catalytic core consists of 2 alpha, 1 beta, 1 beta' and 1 omega subunit. When a sigma factor is associated with the core the holoenzyme is formed, which can initiate transcription.</text>
</comment>
<comment type="similarity">
    <text evidence="1">Belongs to the RNA polymerase beta chain family.</text>
</comment>
<evidence type="ECO:0000255" key="1">
    <source>
        <dbReference type="HAMAP-Rule" id="MF_01321"/>
    </source>
</evidence>
<sequence length="1370" mass="153980">MPTALTHEYRVRKNFGKIHKIIDIPNLIQMQKESYELFLQRDVPSEARSERGLQEVFKSVFPIEDFSGTASLEFVQYSFGEVKYEVEECLARGMTYEAPVKIVVRLVVYDVDKEAGTRSIRDIKEQEIYFGTLPLMTDNGTFIINGTERVIVSQLHRSPGIFFDHDRGKTHSSGKILYSARIIPLRGSWLDLEFDPKDILYIRIDRRRKFPVTVLLKALGYATEELLNYFYPSEKIFLKSEAQSEKELNPDILMGSRAPEDILHPQTGEVLIKKNRKLGKQALRRLQEVGINRLPMKSTELIGQVLAQDVIDYGTGEIVAECNDSIDADMLKEFVERGVGEIELLHLEGQDVSPSFRNTLLMDKVNTQEDALIEIYRRLRPSNPPTLEVATEFFNNLFFNPDHYDLSEVGRLKLNLQLGLEVPLDYRTLRKDDILMAVRQLIRLKDSQGPVDDIDNLGNRRVRAVGELLENQYRIGLVRMERAIKERMTLQEVEALMPHDLINAKPVSAVVKEFFGTSQLSQFMDQTNPLSEITHKRRLSALGPGGLTRERAGFEVRDVHPTHYGRICPIETPEGPNIGLIVSLSTYARVNPYGFIETPYRKVDGSSARKDVSYLTAMDEKEYPIAQANAPLDEKGRFLLDLVSARVAGEPVMVPPNEIRYMDVSPNQLVSVSASLIPFLEHDDANRALMGSNMQRQAVPLIQTRAPLVGTGIERIVAKDSGVAIVARRTGVVEYVDATRIVIRAIEDNGEMGSGVDIYKLIKFQRSNQNTCINQKPLVQHGDLVTKGQIIADGPSTDHGELALGRNVMVAFMSWGGYNFEDSILVSERIGKEDVFTSIHIEEFEVVARDTKLGKEDITRDIPNVGEEALKNLDESGIIRVGAYIKPNDILVGKVTPKGESQLTPEEKLLRAIFGEKASDVKDTSLRVPPGVEGIIIDAKVFSRKGVEKDERTKTIEDQEISRLMKDQRDELEIIFKSTVKRLAKLLENQVSDSAIKDGKKVYIKKGEVFTEEILLNLPSGHWDQLTVAKDPTVSMEIENILANYREQVQLVKSLFEEKIGKLKRGDELPPGVIKMVKVYVAVKRKLQVGDKMAGRHGNKGVVSRILPAEDMPYFPDGTPVDIVLNPLGVPSRMNVGQVLETHIGWAAKGIGMQLAQMLEECRERETMNEKLQRIYNKLEFGTYFKDASERELRGLIPDFKEGIHVASPVFDGAEEAEIRAFLSEAGVSETGQSVLYDGRTGMPFDQPVTVGVMYMLKLHHLVDDKIHARSIGPYSLVTQQPLGGKAQFGGQRLGEMEVWTMEAYGAAYALQEFLTVKSDDVAGRTRMYEKIVKGDNTLEAGLPESFNVLVKELQALALDVRLLEEEEGN</sequence>
<organism>
    <name type="scientific">Syntrophobacter fumaroxidans (strain DSM 10017 / MPOB)</name>
    <dbReference type="NCBI Taxonomy" id="335543"/>
    <lineage>
        <taxon>Bacteria</taxon>
        <taxon>Pseudomonadati</taxon>
        <taxon>Thermodesulfobacteriota</taxon>
        <taxon>Syntrophobacteria</taxon>
        <taxon>Syntrophobacterales</taxon>
        <taxon>Syntrophobacteraceae</taxon>
        <taxon>Syntrophobacter</taxon>
    </lineage>
</organism>
<proteinExistence type="inferred from homology"/>
<protein>
    <recommendedName>
        <fullName evidence="1">DNA-directed RNA polymerase subunit beta</fullName>
        <shortName evidence="1">RNAP subunit beta</shortName>
        <ecNumber evidence="1">2.7.7.6</ecNumber>
    </recommendedName>
    <alternativeName>
        <fullName evidence="1">RNA polymerase subunit beta</fullName>
    </alternativeName>
    <alternativeName>
        <fullName evidence="1">Transcriptase subunit beta</fullName>
    </alternativeName>
</protein>
<name>RPOB_SYNFM</name>
<feature type="chain" id="PRO_0000300420" description="DNA-directed RNA polymerase subunit beta">
    <location>
        <begin position="1"/>
        <end position="1370"/>
    </location>
</feature>
<dbReference type="EC" id="2.7.7.6" evidence="1"/>
<dbReference type="EMBL" id="CP000478">
    <property type="protein sequence ID" value="ABK17236.1"/>
    <property type="molecule type" value="Genomic_DNA"/>
</dbReference>
<dbReference type="RefSeq" id="WP_011698407.1">
    <property type="nucleotide sequence ID" value="NC_008554.1"/>
</dbReference>
<dbReference type="SMR" id="A0LII4"/>
<dbReference type="FunCoup" id="A0LII4">
    <property type="interactions" value="575"/>
</dbReference>
<dbReference type="STRING" id="335543.Sfum_1549"/>
<dbReference type="KEGG" id="sfu:Sfum_1549"/>
<dbReference type="eggNOG" id="COG0085">
    <property type="taxonomic scope" value="Bacteria"/>
</dbReference>
<dbReference type="HOGENOM" id="CLU_000524_4_0_7"/>
<dbReference type="InParanoid" id="A0LII4"/>
<dbReference type="OrthoDB" id="9803954at2"/>
<dbReference type="Proteomes" id="UP000001784">
    <property type="component" value="Chromosome"/>
</dbReference>
<dbReference type="GO" id="GO:0000428">
    <property type="term" value="C:DNA-directed RNA polymerase complex"/>
    <property type="evidence" value="ECO:0007669"/>
    <property type="project" value="UniProtKB-KW"/>
</dbReference>
<dbReference type="GO" id="GO:0003677">
    <property type="term" value="F:DNA binding"/>
    <property type="evidence" value="ECO:0007669"/>
    <property type="project" value="UniProtKB-UniRule"/>
</dbReference>
<dbReference type="GO" id="GO:0003899">
    <property type="term" value="F:DNA-directed RNA polymerase activity"/>
    <property type="evidence" value="ECO:0007669"/>
    <property type="project" value="UniProtKB-UniRule"/>
</dbReference>
<dbReference type="GO" id="GO:0032549">
    <property type="term" value="F:ribonucleoside binding"/>
    <property type="evidence" value="ECO:0007669"/>
    <property type="project" value="InterPro"/>
</dbReference>
<dbReference type="GO" id="GO:0006351">
    <property type="term" value="P:DNA-templated transcription"/>
    <property type="evidence" value="ECO:0007669"/>
    <property type="project" value="UniProtKB-UniRule"/>
</dbReference>
<dbReference type="CDD" id="cd00653">
    <property type="entry name" value="RNA_pol_B_RPB2"/>
    <property type="match status" value="1"/>
</dbReference>
<dbReference type="FunFam" id="2.40.50.100:FF:000006">
    <property type="entry name" value="DNA-directed RNA polymerase subunit beta"/>
    <property type="match status" value="1"/>
</dbReference>
<dbReference type="FunFam" id="3.90.1800.10:FF:000001">
    <property type="entry name" value="DNA-directed RNA polymerase subunit beta"/>
    <property type="match status" value="1"/>
</dbReference>
<dbReference type="Gene3D" id="2.40.50.100">
    <property type="match status" value="1"/>
</dbReference>
<dbReference type="Gene3D" id="2.40.50.150">
    <property type="match status" value="1"/>
</dbReference>
<dbReference type="Gene3D" id="3.90.1100.10">
    <property type="match status" value="2"/>
</dbReference>
<dbReference type="Gene3D" id="2.30.150.10">
    <property type="entry name" value="DNA-directed RNA polymerase, beta subunit, external 1 domain"/>
    <property type="match status" value="1"/>
</dbReference>
<dbReference type="Gene3D" id="2.40.270.10">
    <property type="entry name" value="DNA-directed RNA polymerase, subunit 2, domain 6"/>
    <property type="match status" value="1"/>
</dbReference>
<dbReference type="Gene3D" id="3.90.1800.10">
    <property type="entry name" value="RNA polymerase alpha subunit dimerisation domain"/>
    <property type="match status" value="1"/>
</dbReference>
<dbReference type="Gene3D" id="3.90.1110.10">
    <property type="entry name" value="RNA polymerase Rpb2, domain 2"/>
    <property type="match status" value="1"/>
</dbReference>
<dbReference type="HAMAP" id="MF_01321">
    <property type="entry name" value="RNApol_bact_RpoB"/>
    <property type="match status" value="1"/>
</dbReference>
<dbReference type="InterPro" id="IPR042107">
    <property type="entry name" value="DNA-dir_RNA_pol_bsu_ext_1_sf"/>
</dbReference>
<dbReference type="InterPro" id="IPR019462">
    <property type="entry name" value="DNA-dir_RNA_pol_bsu_external_1"/>
</dbReference>
<dbReference type="InterPro" id="IPR015712">
    <property type="entry name" value="DNA-dir_RNA_pol_su2"/>
</dbReference>
<dbReference type="InterPro" id="IPR007120">
    <property type="entry name" value="DNA-dir_RNAP_su2_dom"/>
</dbReference>
<dbReference type="InterPro" id="IPR037033">
    <property type="entry name" value="DNA-dir_RNAP_su2_hyb_sf"/>
</dbReference>
<dbReference type="InterPro" id="IPR010243">
    <property type="entry name" value="RNA_pol_bsu_bac"/>
</dbReference>
<dbReference type="InterPro" id="IPR007121">
    <property type="entry name" value="RNA_pol_bsu_CS"/>
</dbReference>
<dbReference type="InterPro" id="IPR007644">
    <property type="entry name" value="RNA_pol_bsu_protrusion"/>
</dbReference>
<dbReference type="InterPro" id="IPR007642">
    <property type="entry name" value="RNA_pol_Rpb2_2"/>
</dbReference>
<dbReference type="InterPro" id="IPR037034">
    <property type="entry name" value="RNA_pol_Rpb2_2_sf"/>
</dbReference>
<dbReference type="InterPro" id="IPR007645">
    <property type="entry name" value="RNA_pol_Rpb2_3"/>
</dbReference>
<dbReference type="InterPro" id="IPR007641">
    <property type="entry name" value="RNA_pol_Rpb2_7"/>
</dbReference>
<dbReference type="InterPro" id="IPR014724">
    <property type="entry name" value="RNA_pol_RPB2_OB-fold"/>
</dbReference>
<dbReference type="NCBIfam" id="NF001616">
    <property type="entry name" value="PRK00405.1"/>
    <property type="match status" value="1"/>
</dbReference>
<dbReference type="NCBIfam" id="TIGR02013">
    <property type="entry name" value="rpoB"/>
    <property type="match status" value="1"/>
</dbReference>
<dbReference type="PANTHER" id="PTHR20856">
    <property type="entry name" value="DNA-DIRECTED RNA POLYMERASE I SUBUNIT 2"/>
    <property type="match status" value="1"/>
</dbReference>
<dbReference type="Pfam" id="PF04563">
    <property type="entry name" value="RNA_pol_Rpb2_1"/>
    <property type="match status" value="1"/>
</dbReference>
<dbReference type="Pfam" id="PF04561">
    <property type="entry name" value="RNA_pol_Rpb2_2"/>
    <property type="match status" value="2"/>
</dbReference>
<dbReference type="Pfam" id="PF04565">
    <property type="entry name" value="RNA_pol_Rpb2_3"/>
    <property type="match status" value="1"/>
</dbReference>
<dbReference type="Pfam" id="PF10385">
    <property type="entry name" value="RNA_pol_Rpb2_45"/>
    <property type="match status" value="1"/>
</dbReference>
<dbReference type="Pfam" id="PF00562">
    <property type="entry name" value="RNA_pol_Rpb2_6"/>
    <property type="match status" value="1"/>
</dbReference>
<dbReference type="Pfam" id="PF04560">
    <property type="entry name" value="RNA_pol_Rpb2_7"/>
    <property type="match status" value="1"/>
</dbReference>
<dbReference type="SUPFAM" id="SSF64484">
    <property type="entry name" value="beta and beta-prime subunits of DNA dependent RNA-polymerase"/>
    <property type="match status" value="1"/>
</dbReference>
<dbReference type="PROSITE" id="PS01166">
    <property type="entry name" value="RNA_POL_BETA"/>
    <property type="match status" value="1"/>
</dbReference>
<gene>
    <name evidence="1" type="primary">rpoB</name>
    <name type="ordered locus">Sfum_1549</name>
</gene>
<keyword id="KW-0240">DNA-directed RNA polymerase</keyword>
<keyword id="KW-0548">Nucleotidyltransferase</keyword>
<keyword id="KW-1185">Reference proteome</keyword>
<keyword id="KW-0804">Transcription</keyword>
<keyword id="KW-0808">Transferase</keyword>
<reference key="1">
    <citation type="submission" date="2006-10" db="EMBL/GenBank/DDBJ databases">
        <title>Complete sequence of Syntrophobacter fumaroxidans MPOB.</title>
        <authorList>
            <consortium name="US DOE Joint Genome Institute"/>
            <person name="Copeland A."/>
            <person name="Lucas S."/>
            <person name="Lapidus A."/>
            <person name="Barry K."/>
            <person name="Detter J.C."/>
            <person name="Glavina del Rio T."/>
            <person name="Hammon N."/>
            <person name="Israni S."/>
            <person name="Pitluck S."/>
            <person name="Goltsman E.G."/>
            <person name="Martinez M."/>
            <person name="Schmutz J."/>
            <person name="Larimer F."/>
            <person name="Land M."/>
            <person name="Hauser L."/>
            <person name="Kyrpides N."/>
            <person name="Kim E."/>
            <person name="Boone D.R."/>
            <person name="Brockman F."/>
            <person name="Culley D."/>
            <person name="Ferry J."/>
            <person name="Gunsalus R."/>
            <person name="McInerney M.J."/>
            <person name="Morrison M."/>
            <person name="Plugge C."/>
            <person name="Rohlin L."/>
            <person name="Scholten J."/>
            <person name="Sieber J."/>
            <person name="Stams A.J.M."/>
            <person name="Worm P."/>
            <person name="Henstra A.M."/>
            <person name="Richardson P."/>
        </authorList>
    </citation>
    <scope>NUCLEOTIDE SEQUENCE [LARGE SCALE GENOMIC DNA]</scope>
    <source>
        <strain>DSM 10017 / MPOB</strain>
    </source>
</reference>